<feature type="chain" id="PRO_0000357840" description="NADH-quinone oxidoreductase subunit D">
    <location>
        <begin position="1"/>
        <end position="417"/>
    </location>
</feature>
<protein>
    <recommendedName>
        <fullName evidence="1">NADH-quinone oxidoreductase subunit D</fullName>
        <ecNumber evidence="1">7.1.1.-</ecNumber>
    </recommendedName>
    <alternativeName>
        <fullName evidence="1">NADH dehydrogenase I subunit D</fullName>
    </alternativeName>
    <alternativeName>
        <fullName evidence="1">NDH-1 subunit D</fullName>
    </alternativeName>
</protein>
<dbReference type="EC" id="7.1.1.-" evidence="1"/>
<dbReference type="EMBL" id="CP001013">
    <property type="protein sequence ID" value="ACB33772.1"/>
    <property type="molecule type" value="Genomic_DNA"/>
</dbReference>
<dbReference type="RefSeq" id="WP_012346534.1">
    <property type="nucleotide sequence ID" value="NC_010524.1"/>
</dbReference>
<dbReference type="SMR" id="B1Y830"/>
<dbReference type="STRING" id="395495.Lcho_1504"/>
<dbReference type="KEGG" id="lch:Lcho_1504"/>
<dbReference type="eggNOG" id="COG0649">
    <property type="taxonomic scope" value="Bacteria"/>
</dbReference>
<dbReference type="HOGENOM" id="CLU_015134_1_1_4"/>
<dbReference type="OrthoDB" id="9801496at2"/>
<dbReference type="Proteomes" id="UP000001693">
    <property type="component" value="Chromosome"/>
</dbReference>
<dbReference type="GO" id="GO:0005886">
    <property type="term" value="C:plasma membrane"/>
    <property type="evidence" value="ECO:0007669"/>
    <property type="project" value="UniProtKB-SubCell"/>
</dbReference>
<dbReference type="GO" id="GO:0051287">
    <property type="term" value="F:NAD binding"/>
    <property type="evidence" value="ECO:0007669"/>
    <property type="project" value="InterPro"/>
</dbReference>
<dbReference type="GO" id="GO:0050136">
    <property type="term" value="F:NADH:ubiquinone reductase (non-electrogenic) activity"/>
    <property type="evidence" value="ECO:0007669"/>
    <property type="project" value="UniProtKB-UniRule"/>
</dbReference>
<dbReference type="GO" id="GO:0048038">
    <property type="term" value="F:quinone binding"/>
    <property type="evidence" value="ECO:0007669"/>
    <property type="project" value="UniProtKB-KW"/>
</dbReference>
<dbReference type="FunFam" id="1.10.645.10:FF:000005">
    <property type="entry name" value="NADH-quinone oxidoreductase subunit D"/>
    <property type="match status" value="1"/>
</dbReference>
<dbReference type="Gene3D" id="1.10.645.10">
    <property type="entry name" value="Cytochrome-c3 Hydrogenase, chain B"/>
    <property type="match status" value="1"/>
</dbReference>
<dbReference type="HAMAP" id="MF_01358">
    <property type="entry name" value="NDH1_NuoD"/>
    <property type="match status" value="1"/>
</dbReference>
<dbReference type="InterPro" id="IPR001135">
    <property type="entry name" value="NADH_Q_OxRdtase_suD"/>
</dbReference>
<dbReference type="InterPro" id="IPR014029">
    <property type="entry name" value="NADH_UbQ_OxRdtase_49kDa_CS"/>
</dbReference>
<dbReference type="InterPro" id="IPR022885">
    <property type="entry name" value="NDH1_su_D/H"/>
</dbReference>
<dbReference type="InterPro" id="IPR029014">
    <property type="entry name" value="NiFe-Hase_large"/>
</dbReference>
<dbReference type="NCBIfam" id="TIGR01962">
    <property type="entry name" value="NuoD"/>
    <property type="match status" value="1"/>
</dbReference>
<dbReference type="NCBIfam" id="NF004739">
    <property type="entry name" value="PRK06075.1"/>
    <property type="match status" value="1"/>
</dbReference>
<dbReference type="PANTHER" id="PTHR11993:SF10">
    <property type="entry name" value="NADH DEHYDROGENASE [UBIQUINONE] IRON-SULFUR PROTEIN 2, MITOCHONDRIAL"/>
    <property type="match status" value="1"/>
</dbReference>
<dbReference type="PANTHER" id="PTHR11993">
    <property type="entry name" value="NADH-UBIQUINONE OXIDOREDUCTASE 49 KDA SUBUNIT"/>
    <property type="match status" value="1"/>
</dbReference>
<dbReference type="Pfam" id="PF00346">
    <property type="entry name" value="Complex1_49kDa"/>
    <property type="match status" value="1"/>
</dbReference>
<dbReference type="SUPFAM" id="SSF56762">
    <property type="entry name" value="HydB/Nqo4-like"/>
    <property type="match status" value="1"/>
</dbReference>
<dbReference type="PROSITE" id="PS00535">
    <property type="entry name" value="COMPLEX1_49K"/>
    <property type="match status" value="1"/>
</dbReference>
<evidence type="ECO:0000255" key="1">
    <source>
        <dbReference type="HAMAP-Rule" id="MF_01358"/>
    </source>
</evidence>
<reference key="1">
    <citation type="submission" date="2008-03" db="EMBL/GenBank/DDBJ databases">
        <title>Complete sequence of Leptothrix cholodnii SP-6.</title>
        <authorList>
            <consortium name="US DOE Joint Genome Institute"/>
            <person name="Copeland A."/>
            <person name="Lucas S."/>
            <person name="Lapidus A."/>
            <person name="Glavina del Rio T."/>
            <person name="Dalin E."/>
            <person name="Tice H."/>
            <person name="Bruce D."/>
            <person name="Goodwin L."/>
            <person name="Pitluck S."/>
            <person name="Chertkov O."/>
            <person name="Brettin T."/>
            <person name="Detter J.C."/>
            <person name="Han C."/>
            <person name="Kuske C.R."/>
            <person name="Schmutz J."/>
            <person name="Larimer F."/>
            <person name="Land M."/>
            <person name="Hauser L."/>
            <person name="Kyrpides N."/>
            <person name="Lykidis A."/>
            <person name="Emerson D."/>
            <person name="Richardson P."/>
        </authorList>
    </citation>
    <scope>NUCLEOTIDE SEQUENCE [LARGE SCALE GENOMIC DNA]</scope>
    <source>
        <strain>ATCC 51168 / LMG 8142 / SP-6</strain>
    </source>
</reference>
<comment type="function">
    <text evidence="1">NDH-1 shuttles electrons from NADH, via FMN and iron-sulfur (Fe-S) centers, to quinones in the respiratory chain. The immediate electron acceptor for the enzyme in this species is believed to be ubiquinone. Couples the redox reaction to proton translocation (for every two electrons transferred, four hydrogen ions are translocated across the cytoplasmic membrane), and thus conserves the redox energy in a proton gradient.</text>
</comment>
<comment type="catalytic activity">
    <reaction evidence="1">
        <text>a quinone + NADH + 5 H(+)(in) = a quinol + NAD(+) + 4 H(+)(out)</text>
        <dbReference type="Rhea" id="RHEA:57888"/>
        <dbReference type="ChEBI" id="CHEBI:15378"/>
        <dbReference type="ChEBI" id="CHEBI:24646"/>
        <dbReference type="ChEBI" id="CHEBI:57540"/>
        <dbReference type="ChEBI" id="CHEBI:57945"/>
        <dbReference type="ChEBI" id="CHEBI:132124"/>
    </reaction>
</comment>
<comment type="subunit">
    <text evidence="1">NDH-1 is composed of 14 different subunits. Subunits NuoB, C, D, E, F, and G constitute the peripheral sector of the complex.</text>
</comment>
<comment type="subcellular location">
    <subcellularLocation>
        <location evidence="1">Cell inner membrane</location>
        <topology evidence="1">Peripheral membrane protein</topology>
        <orientation evidence="1">Cytoplasmic side</orientation>
    </subcellularLocation>
</comment>
<comment type="similarity">
    <text evidence="1">Belongs to the complex I 49 kDa subunit family.</text>
</comment>
<sequence length="417" mass="47520">MAEIKNYTLNFGPQHPAAHGVLRLVLELDGEVIQRADPHIGLLHRGTEKLAESKTFIQSLPYMDRLDYVSMMCNEHAYCLAIEKLMGIQVPERAQYIRVMFSEITRLLNHLLWLGCHGMDCGAMNMLIYCFREREDLFDMYEAVSGARMHAAYFRPGGVYRDLPDVMPQYKVSKIRNAKAMARLNENRQGSLLDFIDDFTKRFPTLVDEYETLLTDNRIWKQRTVGIGVLTPERALNLGLTGAMIRGSGIAWDLRKTQPYDVYDRMDFDIPVGVNGDTYDRYLVRVEEMRQSNRIIEQCSAWLRANPGPVITDNHKVAPPSRVEMKTSMEELIHHFKLFTEGFHVPEGEAYAAVEHPKGEFGIYAISDGANKPYRLKIRAPGFAHLAALDEMSRGHMIADAVAIIGTMDIVFGEIDR</sequence>
<organism>
    <name type="scientific">Leptothrix cholodnii (strain ATCC 51168 / LMG 8142 / SP-6)</name>
    <name type="common">Leptothrix discophora (strain SP-6)</name>
    <dbReference type="NCBI Taxonomy" id="395495"/>
    <lineage>
        <taxon>Bacteria</taxon>
        <taxon>Pseudomonadati</taxon>
        <taxon>Pseudomonadota</taxon>
        <taxon>Betaproteobacteria</taxon>
        <taxon>Burkholderiales</taxon>
        <taxon>Sphaerotilaceae</taxon>
        <taxon>Leptothrix</taxon>
    </lineage>
</organism>
<name>NUOD_LEPCP</name>
<gene>
    <name evidence="1" type="primary">nuoD</name>
    <name type="ordered locus">Lcho_1504</name>
</gene>
<keyword id="KW-0997">Cell inner membrane</keyword>
<keyword id="KW-1003">Cell membrane</keyword>
<keyword id="KW-0472">Membrane</keyword>
<keyword id="KW-0520">NAD</keyword>
<keyword id="KW-0874">Quinone</keyword>
<keyword id="KW-1185">Reference proteome</keyword>
<keyword id="KW-1278">Translocase</keyword>
<keyword id="KW-0813">Transport</keyword>
<keyword id="KW-0830">Ubiquinone</keyword>
<proteinExistence type="inferred from homology"/>
<accession>B1Y830</accession>